<sequence length="1033" mass="118691">MAPRLQLEKAAWRWTETVPPEAVTQEHIEAAYRVGLEPCQRGTCRRNCRGNPNCLVGIGEHVWLGEIDENSFHNIDDPNCERRKKNAFVGLTNLGATCYVNTFLQMWFLNLELRQALYLCSSNEHAAGESIPKDKDYEPQTICEHLQYLFALLQNSKRRYIDPSGFVKALGLDTGQQQDAQEFSKLFMSLLEDTLSKQKNPDVRNIVQKQFCGEYAYVTVCNQCGRESKLVSKFYELELNIQGHKQLTDCITEFLKEEKLEGDNRYFCETCQSKQNATRKIRLLSLPCTLNLQLMRFVFDRQTGHKKKLNTYIGFSELLDMEPFMEQKNGVYVYELSAVLIHRGVSAYSGHYIAHVKDPQTGEWYKFNDEDIEKMEGKKLQLGIEEDLAEPSKSQTRKPKCGKGTHCSRNAYMLVYRLQTREKSLTVEVPAFLQELVERDNCKFEEWCNEMAEMRKQSVARGKIKHEEVKELYQRLPAEAGSPYDFISLEWLQKWLDESTPPKPIDNTACLCSHGKLHPDKICIMKRISEYVADFFYRRYGGGPRLNVKALCKDCVVERCRILRLKNQLNEDYKTVTNLLKITVKGSEGFWVGKASLRSWRQLALEQLNEQDEDAEHSNGKLNGNAPNKDEVNEEKREEEEELNFNEDIVCPHGDLCISENERRVVSKEAWKKLKQYFPKAPEFPSNKECCSQCKILEREGEENEALHKMMASEQKTSLQNLFHDKCRPCLGSWPQETDELYIVSQFFVEEWRKFVRRPTRCSPVSSLGNSALLCPHGGLMFTYASMTKEDSKLIALIWPSEWERIQKLFVVDHVIKITRTRAAGEPESALYSSEPQLCPECRGGLLCQQQRDLREYTQATIYIHKVVDNKKVMKDAAPELNVSSSEAEEEREENKPEGEQDPDFNQSNGGAKRQKLSHQSYISYQKQGIRRSTRHRKVRGEKALLVSANQTLKELKIQIMHAFSVAPFDQNLLIDGKILSDDTATLGSLGIIPESVILLKADEPIADYAAMDDVMQVCMPEEGFKGTGLLGH</sequence>
<dbReference type="EC" id="3.4.19.12"/>
<dbReference type="EMBL" id="AJ719539">
    <property type="protein sequence ID" value="CAG31198.1"/>
    <property type="molecule type" value="mRNA"/>
</dbReference>
<dbReference type="RefSeq" id="NP_001073211.1">
    <property type="nucleotide sequence ID" value="NM_001079743.1"/>
</dbReference>
<dbReference type="SMR" id="Q5ZM45"/>
<dbReference type="FunCoup" id="Q5ZM45">
    <property type="interactions" value="2705"/>
</dbReference>
<dbReference type="STRING" id="9031.ENSGALP00000071401"/>
<dbReference type="MEROPS" id="C19.068"/>
<dbReference type="GlyGen" id="Q5ZM45">
    <property type="glycosylation" value="1 site"/>
</dbReference>
<dbReference type="PaxDb" id="9031-ENSGALP00000022836"/>
<dbReference type="GeneID" id="769457"/>
<dbReference type="KEGG" id="gga:769457"/>
<dbReference type="CTD" id="84196"/>
<dbReference type="VEuPathDB" id="HostDB:geneid_769457"/>
<dbReference type="eggNOG" id="KOG1863">
    <property type="taxonomic scope" value="Eukaryota"/>
</dbReference>
<dbReference type="InParanoid" id="Q5ZM45"/>
<dbReference type="OrthoDB" id="289038at2759"/>
<dbReference type="PhylomeDB" id="Q5ZM45"/>
<dbReference type="PRO" id="PR:Q5ZM45"/>
<dbReference type="Proteomes" id="UP000000539">
    <property type="component" value="Unassembled WGS sequence"/>
</dbReference>
<dbReference type="GO" id="GO:0005829">
    <property type="term" value="C:cytosol"/>
    <property type="evidence" value="ECO:0000318"/>
    <property type="project" value="GO_Central"/>
</dbReference>
<dbReference type="GO" id="GO:0005634">
    <property type="term" value="C:nucleus"/>
    <property type="evidence" value="ECO:0000318"/>
    <property type="project" value="GO_Central"/>
</dbReference>
<dbReference type="GO" id="GO:0004843">
    <property type="term" value="F:cysteine-type deubiquitinase activity"/>
    <property type="evidence" value="ECO:0000318"/>
    <property type="project" value="GO_Central"/>
</dbReference>
<dbReference type="GO" id="GO:0004197">
    <property type="term" value="F:cysteine-type endopeptidase activity"/>
    <property type="evidence" value="ECO:0007669"/>
    <property type="project" value="InterPro"/>
</dbReference>
<dbReference type="GO" id="GO:0016579">
    <property type="term" value="P:protein deubiquitination"/>
    <property type="evidence" value="ECO:0007669"/>
    <property type="project" value="InterPro"/>
</dbReference>
<dbReference type="GO" id="GO:0006508">
    <property type="term" value="P:proteolysis"/>
    <property type="evidence" value="ECO:0007669"/>
    <property type="project" value="UniProtKB-KW"/>
</dbReference>
<dbReference type="GO" id="GO:0031647">
    <property type="term" value="P:regulation of protein stability"/>
    <property type="evidence" value="ECO:0000318"/>
    <property type="project" value="GO_Central"/>
</dbReference>
<dbReference type="CDD" id="cd02668">
    <property type="entry name" value="Peptidase_C19L"/>
    <property type="match status" value="1"/>
</dbReference>
<dbReference type="CDD" id="cd01795">
    <property type="entry name" value="Ubl_USP48"/>
    <property type="match status" value="1"/>
</dbReference>
<dbReference type="FunFam" id="3.90.70.10:FF:000029">
    <property type="entry name" value="ubiquitin carboxyl-terminal hydrolase 48 isoform X1"/>
    <property type="match status" value="1"/>
</dbReference>
<dbReference type="Gene3D" id="3.90.70.10">
    <property type="entry name" value="Cysteine proteinases"/>
    <property type="match status" value="1"/>
</dbReference>
<dbReference type="Gene3D" id="3.30.2230.10">
    <property type="entry name" value="DUSP-like"/>
    <property type="match status" value="1"/>
</dbReference>
<dbReference type="Gene3D" id="3.10.20.90">
    <property type="entry name" value="Phosphatidylinositol 3-kinase Catalytic Subunit, Chain A, domain 1"/>
    <property type="match status" value="1"/>
</dbReference>
<dbReference type="InterPro" id="IPR035927">
    <property type="entry name" value="DUSP-like_sf"/>
</dbReference>
<dbReference type="InterPro" id="IPR038765">
    <property type="entry name" value="Papain-like_cys_pep_sf"/>
</dbReference>
<dbReference type="InterPro" id="IPR006615">
    <property type="entry name" value="Pept_C19_DUSP"/>
</dbReference>
<dbReference type="InterPro" id="IPR050164">
    <property type="entry name" value="Peptidase_C19"/>
</dbReference>
<dbReference type="InterPro" id="IPR001394">
    <property type="entry name" value="Peptidase_C19_UCH"/>
</dbReference>
<dbReference type="InterPro" id="IPR000626">
    <property type="entry name" value="Ubiquitin-like_dom"/>
</dbReference>
<dbReference type="InterPro" id="IPR029071">
    <property type="entry name" value="Ubiquitin-like_domsf"/>
</dbReference>
<dbReference type="InterPro" id="IPR044743">
    <property type="entry name" value="Ubl_USP48"/>
</dbReference>
<dbReference type="InterPro" id="IPR033841">
    <property type="entry name" value="USP48"/>
</dbReference>
<dbReference type="InterPro" id="IPR018200">
    <property type="entry name" value="USP_CS"/>
</dbReference>
<dbReference type="InterPro" id="IPR028889">
    <property type="entry name" value="USP_dom"/>
</dbReference>
<dbReference type="PANTHER" id="PTHR24006">
    <property type="entry name" value="UBIQUITIN CARBOXYL-TERMINAL HYDROLASE"/>
    <property type="match status" value="1"/>
</dbReference>
<dbReference type="PANTHER" id="PTHR24006:SF722">
    <property type="entry name" value="UBIQUITIN CARBOXYL-TERMINAL HYDROLASE 48"/>
    <property type="match status" value="1"/>
</dbReference>
<dbReference type="Pfam" id="PF06337">
    <property type="entry name" value="DUSP"/>
    <property type="match status" value="1"/>
</dbReference>
<dbReference type="Pfam" id="PF00240">
    <property type="entry name" value="ubiquitin"/>
    <property type="match status" value="1"/>
</dbReference>
<dbReference type="Pfam" id="PF00443">
    <property type="entry name" value="UCH"/>
    <property type="match status" value="1"/>
</dbReference>
<dbReference type="SMART" id="SM00695">
    <property type="entry name" value="DUSP"/>
    <property type="match status" value="1"/>
</dbReference>
<dbReference type="SUPFAM" id="SSF54001">
    <property type="entry name" value="Cysteine proteinases"/>
    <property type="match status" value="1"/>
</dbReference>
<dbReference type="SUPFAM" id="SSF143791">
    <property type="entry name" value="DUSP-like"/>
    <property type="match status" value="1"/>
</dbReference>
<dbReference type="SUPFAM" id="SSF54236">
    <property type="entry name" value="Ubiquitin-like"/>
    <property type="match status" value="1"/>
</dbReference>
<dbReference type="PROSITE" id="PS51283">
    <property type="entry name" value="DUSP"/>
    <property type="match status" value="3"/>
</dbReference>
<dbReference type="PROSITE" id="PS50053">
    <property type="entry name" value="UBIQUITIN_2"/>
    <property type="match status" value="1"/>
</dbReference>
<dbReference type="PROSITE" id="PS00973">
    <property type="entry name" value="USP_2"/>
    <property type="match status" value="1"/>
</dbReference>
<dbReference type="PROSITE" id="PS50235">
    <property type="entry name" value="USP_3"/>
    <property type="match status" value="1"/>
</dbReference>
<comment type="function">
    <text evidence="1">Recognizes and hydrolyzes the peptide bond at the C-terminal Gly of ubiquitin. Involved in the processing of poly-ubiquitin precursors as well as that of ubiquitinated proteins (By similarity).</text>
</comment>
<comment type="catalytic activity">
    <reaction>
        <text>Thiol-dependent hydrolysis of ester, thioester, amide, peptide and isopeptide bonds formed by the C-terminal Gly of ubiquitin (a 76-residue protein attached to proteins as an intracellular targeting signal).</text>
        <dbReference type="EC" id="3.4.19.12"/>
    </reaction>
</comment>
<comment type="subcellular location">
    <subcellularLocation>
        <location evidence="1">Cytoplasm</location>
    </subcellularLocation>
    <subcellularLocation>
        <location evidence="1">Nucleus</location>
    </subcellularLocation>
</comment>
<comment type="similarity">
    <text evidence="6">Belongs to the peptidase C19 family.</text>
</comment>
<organism>
    <name type="scientific">Gallus gallus</name>
    <name type="common">Chicken</name>
    <dbReference type="NCBI Taxonomy" id="9031"/>
    <lineage>
        <taxon>Eukaryota</taxon>
        <taxon>Metazoa</taxon>
        <taxon>Chordata</taxon>
        <taxon>Craniata</taxon>
        <taxon>Vertebrata</taxon>
        <taxon>Euteleostomi</taxon>
        <taxon>Archelosauria</taxon>
        <taxon>Archosauria</taxon>
        <taxon>Dinosauria</taxon>
        <taxon>Saurischia</taxon>
        <taxon>Theropoda</taxon>
        <taxon>Coelurosauria</taxon>
        <taxon>Aves</taxon>
        <taxon>Neognathae</taxon>
        <taxon>Galloanserae</taxon>
        <taxon>Galliformes</taxon>
        <taxon>Phasianidae</taxon>
        <taxon>Phasianinae</taxon>
        <taxon>Gallus</taxon>
    </lineage>
</organism>
<name>UBP48_CHICK</name>
<proteinExistence type="evidence at transcript level"/>
<reference key="1">
    <citation type="journal article" date="2005" name="Genome Biol.">
        <title>Full-length cDNAs from chicken bursal lymphocytes to facilitate gene function analysis.</title>
        <authorList>
            <person name="Caldwell R.B."/>
            <person name="Kierzek A.M."/>
            <person name="Arakawa H."/>
            <person name="Bezzubov Y."/>
            <person name="Zaim J."/>
            <person name="Fiedler P."/>
            <person name="Kutter S."/>
            <person name="Blagodatski A."/>
            <person name="Kostovska D."/>
            <person name="Koter M."/>
            <person name="Plachy J."/>
            <person name="Carninci P."/>
            <person name="Hayashizaki Y."/>
            <person name="Buerstedde J.-M."/>
        </authorList>
    </citation>
    <scope>NUCLEOTIDE SEQUENCE [LARGE SCALE MRNA]</scope>
    <source>
        <strain>CB</strain>
        <tissue>Bursa of Fabricius</tissue>
    </source>
</reference>
<accession>Q5ZM45</accession>
<evidence type="ECO:0000250" key="1"/>
<evidence type="ECO:0000255" key="2">
    <source>
        <dbReference type="PROSITE-ProRule" id="PRU00214"/>
    </source>
</evidence>
<evidence type="ECO:0000255" key="3">
    <source>
        <dbReference type="PROSITE-ProRule" id="PRU00613"/>
    </source>
</evidence>
<evidence type="ECO:0000255" key="4">
    <source>
        <dbReference type="PROSITE-ProRule" id="PRU10093"/>
    </source>
</evidence>
<evidence type="ECO:0000256" key="5">
    <source>
        <dbReference type="SAM" id="MobiDB-lite"/>
    </source>
</evidence>
<evidence type="ECO:0000305" key="6"/>
<keyword id="KW-0963">Cytoplasm</keyword>
<keyword id="KW-0378">Hydrolase</keyword>
<keyword id="KW-0539">Nucleus</keyword>
<keyword id="KW-0645">Protease</keyword>
<keyword id="KW-1185">Reference proteome</keyword>
<keyword id="KW-0677">Repeat</keyword>
<keyword id="KW-0788">Thiol protease</keyword>
<keyword id="KW-0833">Ubl conjugation pathway</keyword>
<feature type="chain" id="PRO_0000249526" description="Ubiquitin carboxyl-terminal hydrolase 48">
    <location>
        <begin position="1"/>
        <end position="1033"/>
    </location>
</feature>
<feature type="domain" description="USP">
    <location>
        <begin position="89"/>
        <end position="419"/>
    </location>
</feature>
<feature type="domain" description="DUSP 1" evidence="3">
    <location>
        <begin position="457"/>
        <end position="552"/>
    </location>
</feature>
<feature type="domain" description="DUSP 2" evidence="3">
    <location>
        <begin position="567"/>
        <end position="690"/>
    </location>
</feature>
<feature type="domain" description="DUSP 3" evidence="3">
    <location>
        <begin position="710"/>
        <end position="823"/>
    </location>
</feature>
<feature type="domain" description="Ubiquitin-like" evidence="2">
    <location>
        <begin position="931"/>
        <end position="1007"/>
    </location>
</feature>
<feature type="region of interest" description="Disordered" evidence="5">
    <location>
        <begin position="610"/>
        <end position="639"/>
    </location>
</feature>
<feature type="region of interest" description="Disordered" evidence="5">
    <location>
        <begin position="878"/>
        <end position="920"/>
    </location>
</feature>
<feature type="active site" description="Nucleophile" evidence="4">
    <location>
        <position position="98"/>
    </location>
</feature>
<feature type="active site" description="Proton acceptor" evidence="4">
    <location>
        <position position="351"/>
    </location>
</feature>
<protein>
    <recommendedName>
        <fullName>Ubiquitin carboxyl-terminal hydrolase 48</fullName>
        <ecNumber>3.4.19.12</ecNumber>
    </recommendedName>
    <alternativeName>
        <fullName>Deubiquitinating enzyme 48</fullName>
    </alternativeName>
    <alternativeName>
        <fullName>Ubiquitin thioesterase 48</fullName>
    </alternativeName>
    <alternativeName>
        <fullName>Ubiquitin-specific-processing protease 48</fullName>
    </alternativeName>
</protein>
<gene>
    <name type="primary">USP48</name>
    <name type="ORF">RCJMB04_3d5</name>
</gene>